<organism>
    <name type="scientific">Burkholderia multivorans (strain ATCC 17616 / 249)</name>
    <dbReference type="NCBI Taxonomy" id="395019"/>
    <lineage>
        <taxon>Bacteria</taxon>
        <taxon>Pseudomonadati</taxon>
        <taxon>Pseudomonadota</taxon>
        <taxon>Betaproteobacteria</taxon>
        <taxon>Burkholderiales</taxon>
        <taxon>Burkholderiaceae</taxon>
        <taxon>Burkholderia</taxon>
        <taxon>Burkholderia cepacia complex</taxon>
    </lineage>
</organism>
<evidence type="ECO:0000255" key="1">
    <source>
        <dbReference type="HAMAP-Rule" id="MF_00446"/>
    </source>
</evidence>
<sequence>MQRHMLKSKIHRAAVTHCELHYEGSCAIDEDLLEAANIVENERIDIWNINNGERFSTYAIKGERGSGMISLNGSAARRAQLGDLVIIAAFAMVEEAELQAGWKPKLVFIDEGNKIKGHRDHVPTQTWT</sequence>
<dbReference type="EC" id="4.1.1.11" evidence="1"/>
<dbReference type="EMBL" id="CP000868">
    <property type="protein sequence ID" value="ABX14545.1"/>
    <property type="molecule type" value="Genomic_DNA"/>
</dbReference>
<dbReference type="EMBL" id="AP009385">
    <property type="protein sequence ID" value="BAG44301.1"/>
    <property type="molecule type" value="Genomic_DNA"/>
</dbReference>
<dbReference type="RefSeq" id="WP_006398605.1">
    <property type="nucleotide sequence ID" value="NC_010804.1"/>
</dbReference>
<dbReference type="SMR" id="A9AHJ2"/>
<dbReference type="STRING" id="395019.BMULJ_02407"/>
<dbReference type="GeneID" id="89570961"/>
<dbReference type="KEGG" id="bmj:BMULJ_02407"/>
<dbReference type="KEGG" id="bmu:Bmul_0851"/>
<dbReference type="eggNOG" id="COG0853">
    <property type="taxonomic scope" value="Bacteria"/>
</dbReference>
<dbReference type="HOGENOM" id="CLU_115305_2_1_4"/>
<dbReference type="UniPathway" id="UPA00028">
    <property type="reaction ID" value="UER00002"/>
</dbReference>
<dbReference type="Proteomes" id="UP000008815">
    <property type="component" value="Chromosome 1"/>
</dbReference>
<dbReference type="GO" id="GO:0005829">
    <property type="term" value="C:cytosol"/>
    <property type="evidence" value="ECO:0007669"/>
    <property type="project" value="TreeGrafter"/>
</dbReference>
<dbReference type="GO" id="GO:0004068">
    <property type="term" value="F:aspartate 1-decarboxylase activity"/>
    <property type="evidence" value="ECO:0007669"/>
    <property type="project" value="UniProtKB-UniRule"/>
</dbReference>
<dbReference type="GO" id="GO:0006523">
    <property type="term" value="P:alanine biosynthetic process"/>
    <property type="evidence" value="ECO:0007669"/>
    <property type="project" value="InterPro"/>
</dbReference>
<dbReference type="GO" id="GO:0015940">
    <property type="term" value="P:pantothenate biosynthetic process"/>
    <property type="evidence" value="ECO:0007669"/>
    <property type="project" value="UniProtKB-UniRule"/>
</dbReference>
<dbReference type="CDD" id="cd06919">
    <property type="entry name" value="Asp_decarbox"/>
    <property type="match status" value="1"/>
</dbReference>
<dbReference type="Gene3D" id="2.40.40.20">
    <property type="match status" value="1"/>
</dbReference>
<dbReference type="HAMAP" id="MF_00446">
    <property type="entry name" value="PanD"/>
    <property type="match status" value="1"/>
</dbReference>
<dbReference type="InterPro" id="IPR009010">
    <property type="entry name" value="Asp_de-COase-like_dom_sf"/>
</dbReference>
<dbReference type="InterPro" id="IPR003190">
    <property type="entry name" value="Asp_decarbox"/>
</dbReference>
<dbReference type="NCBIfam" id="TIGR00223">
    <property type="entry name" value="panD"/>
    <property type="match status" value="1"/>
</dbReference>
<dbReference type="PANTHER" id="PTHR21012">
    <property type="entry name" value="ASPARTATE 1-DECARBOXYLASE"/>
    <property type="match status" value="1"/>
</dbReference>
<dbReference type="PANTHER" id="PTHR21012:SF0">
    <property type="entry name" value="ASPARTATE 1-DECARBOXYLASE"/>
    <property type="match status" value="1"/>
</dbReference>
<dbReference type="Pfam" id="PF02261">
    <property type="entry name" value="Asp_decarbox"/>
    <property type="match status" value="1"/>
</dbReference>
<dbReference type="PIRSF" id="PIRSF006246">
    <property type="entry name" value="Asp_decarbox"/>
    <property type="match status" value="1"/>
</dbReference>
<dbReference type="SUPFAM" id="SSF50692">
    <property type="entry name" value="ADC-like"/>
    <property type="match status" value="1"/>
</dbReference>
<accession>A9AHJ2</accession>
<name>PAND_BURM1</name>
<comment type="function">
    <text evidence="1">Catalyzes the pyruvoyl-dependent decarboxylation of aspartate to produce beta-alanine.</text>
</comment>
<comment type="catalytic activity">
    <reaction evidence="1">
        <text>L-aspartate + H(+) = beta-alanine + CO2</text>
        <dbReference type="Rhea" id="RHEA:19497"/>
        <dbReference type="ChEBI" id="CHEBI:15378"/>
        <dbReference type="ChEBI" id="CHEBI:16526"/>
        <dbReference type="ChEBI" id="CHEBI:29991"/>
        <dbReference type="ChEBI" id="CHEBI:57966"/>
        <dbReference type="EC" id="4.1.1.11"/>
    </reaction>
</comment>
<comment type="cofactor">
    <cofactor evidence="1">
        <name>pyruvate</name>
        <dbReference type="ChEBI" id="CHEBI:15361"/>
    </cofactor>
    <text evidence="1">Binds 1 pyruvoyl group covalently per subunit.</text>
</comment>
<comment type="pathway">
    <text evidence="1">Cofactor biosynthesis; (R)-pantothenate biosynthesis; beta-alanine from L-aspartate: step 1/1.</text>
</comment>
<comment type="subunit">
    <text evidence="1">Heterooctamer of four alpha and four beta subunits.</text>
</comment>
<comment type="subcellular location">
    <subcellularLocation>
        <location evidence="1">Cytoplasm</location>
    </subcellularLocation>
</comment>
<comment type="PTM">
    <text evidence="1">Is synthesized initially as an inactive proenzyme, which is activated by self-cleavage at a specific serine bond to produce a beta-subunit with a hydroxyl group at its C-terminus and an alpha-subunit with a pyruvoyl group at its N-terminus.</text>
</comment>
<comment type="similarity">
    <text evidence="1">Belongs to the PanD family.</text>
</comment>
<feature type="chain" id="PRO_1000191936" description="Aspartate 1-decarboxylase beta chain" evidence="1">
    <location>
        <begin position="1"/>
        <end position="24"/>
    </location>
</feature>
<feature type="chain" id="PRO_1000191937" description="Aspartate 1-decarboxylase alpha chain" evidence="1">
    <location>
        <begin position="25"/>
        <end position="128"/>
    </location>
</feature>
<feature type="active site" description="Schiff-base intermediate with substrate; via pyruvic acid" evidence="1">
    <location>
        <position position="25"/>
    </location>
</feature>
<feature type="active site" description="Proton donor" evidence="1">
    <location>
        <position position="58"/>
    </location>
</feature>
<feature type="binding site" evidence="1">
    <location>
        <position position="57"/>
    </location>
    <ligand>
        <name>substrate</name>
    </ligand>
</feature>
<feature type="binding site" evidence="1">
    <location>
        <begin position="73"/>
        <end position="75"/>
    </location>
    <ligand>
        <name>substrate</name>
    </ligand>
</feature>
<feature type="modified residue" description="Pyruvic acid (Ser)" evidence="1">
    <location>
        <position position="25"/>
    </location>
</feature>
<gene>
    <name evidence="1" type="primary">panD</name>
    <name type="ordered locus">Bmul_0851</name>
    <name type="ordered locus">BMULJ_02407</name>
</gene>
<reference key="1">
    <citation type="submission" date="2007-10" db="EMBL/GenBank/DDBJ databases">
        <title>Complete sequence of chromosome 1 of Burkholderia multivorans ATCC 17616.</title>
        <authorList>
            <person name="Copeland A."/>
            <person name="Lucas S."/>
            <person name="Lapidus A."/>
            <person name="Barry K."/>
            <person name="Glavina del Rio T."/>
            <person name="Dalin E."/>
            <person name="Tice H."/>
            <person name="Pitluck S."/>
            <person name="Chain P."/>
            <person name="Malfatti S."/>
            <person name="Shin M."/>
            <person name="Vergez L."/>
            <person name="Schmutz J."/>
            <person name="Larimer F."/>
            <person name="Land M."/>
            <person name="Hauser L."/>
            <person name="Kyrpides N."/>
            <person name="Kim E."/>
            <person name="Tiedje J."/>
            <person name="Richardson P."/>
        </authorList>
    </citation>
    <scope>NUCLEOTIDE SEQUENCE [LARGE SCALE GENOMIC DNA]</scope>
    <source>
        <strain>ATCC 17616 / 249</strain>
    </source>
</reference>
<reference key="2">
    <citation type="submission" date="2007-04" db="EMBL/GenBank/DDBJ databases">
        <title>Complete genome sequence of Burkholderia multivorans ATCC 17616.</title>
        <authorList>
            <person name="Ohtsubo Y."/>
            <person name="Yamashita A."/>
            <person name="Kurokawa K."/>
            <person name="Takami H."/>
            <person name="Yuhara S."/>
            <person name="Nishiyama E."/>
            <person name="Endo R."/>
            <person name="Miyazaki R."/>
            <person name="Ono A."/>
            <person name="Yano K."/>
            <person name="Ito M."/>
            <person name="Sota M."/>
            <person name="Yuji N."/>
            <person name="Hattori M."/>
            <person name="Tsuda M."/>
        </authorList>
    </citation>
    <scope>NUCLEOTIDE SEQUENCE [LARGE SCALE GENOMIC DNA]</scope>
    <source>
        <strain>ATCC 17616 / 249</strain>
    </source>
</reference>
<protein>
    <recommendedName>
        <fullName evidence="1">Aspartate 1-decarboxylase</fullName>
        <ecNumber evidence="1">4.1.1.11</ecNumber>
    </recommendedName>
    <alternativeName>
        <fullName evidence="1">Aspartate alpha-decarboxylase</fullName>
    </alternativeName>
    <component>
        <recommendedName>
            <fullName evidence="1">Aspartate 1-decarboxylase beta chain</fullName>
        </recommendedName>
    </component>
    <component>
        <recommendedName>
            <fullName evidence="1">Aspartate 1-decarboxylase alpha chain</fullName>
        </recommendedName>
    </component>
</protein>
<keyword id="KW-0068">Autocatalytic cleavage</keyword>
<keyword id="KW-0963">Cytoplasm</keyword>
<keyword id="KW-0210">Decarboxylase</keyword>
<keyword id="KW-0456">Lyase</keyword>
<keyword id="KW-0566">Pantothenate biosynthesis</keyword>
<keyword id="KW-0670">Pyruvate</keyword>
<keyword id="KW-1185">Reference proteome</keyword>
<keyword id="KW-0704">Schiff base</keyword>
<keyword id="KW-0865">Zymogen</keyword>
<proteinExistence type="inferred from homology"/>